<feature type="chain" id="PRO_0000046268" description="Plasma membrane ATPase">
    <location>
        <begin position="1"/>
        <end position="920"/>
    </location>
</feature>
<feature type="topological domain" description="Cytoplasmic" evidence="3">
    <location>
        <begin position="1"/>
        <end position="115"/>
    </location>
</feature>
<feature type="transmembrane region" description="Helical; Name=1" evidence="3">
    <location>
        <begin position="116"/>
        <end position="138"/>
    </location>
</feature>
<feature type="topological domain" description="Extracellular" evidence="3">
    <location>
        <begin position="139"/>
        <end position="140"/>
    </location>
</feature>
<feature type="transmembrane region" description="Helical; Name=2" evidence="3">
    <location>
        <begin position="141"/>
        <end position="160"/>
    </location>
</feature>
<feature type="topological domain" description="Cytoplasmic" evidence="3">
    <location>
        <begin position="161"/>
        <end position="291"/>
    </location>
</feature>
<feature type="transmembrane region" description="Helical; Name=3" evidence="3">
    <location>
        <begin position="292"/>
        <end position="314"/>
    </location>
</feature>
<feature type="topological domain" description="Extracellular" evidence="3">
    <location>
        <begin position="315"/>
        <end position="321"/>
    </location>
</feature>
<feature type="transmembrane region" description="Helical; Name=4" evidence="3">
    <location>
        <begin position="322"/>
        <end position="354"/>
    </location>
</feature>
<feature type="topological domain" description="Cytoplasmic" evidence="3">
    <location>
        <begin position="355"/>
        <end position="687"/>
    </location>
</feature>
<feature type="transmembrane region" description="Helical; Name=5" evidence="3">
    <location>
        <begin position="688"/>
        <end position="713"/>
    </location>
</feature>
<feature type="topological domain" description="Extracellular" evidence="3">
    <location>
        <begin position="714"/>
        <end position="720"/>
    </location>
</feature>
<feature type="transmembrane region" description="Helical; Name=6" evidence="3">
    <location>
        <begin position="721"/>
        <end position="738"/>
    </location>
</feature>
<feature type="topological domain" description="Cytoplasmic" evidence="3">
    <location>
        <begin position="739"/>
        <end position="754"/>
    </location>
</feature>
<feature type="transmembrane region" description="Helical; Name=7" evidence="3">
    <location>
        <begin position="755"/>
        <end position="779"/>
    </location>
</feature>
<feature type="topological domain" description="Extracellular" evidence="3">
    <location>
        <begin position="780"/>
        <end position="806"/>
    </location>
</feature>
<feature type="transmembrane region" description="Helical; Name=8" evidence="3">
    <location>
        <begin position="807"/>
        <end position="826"/>
    </location>
</feature>
<feature type="transmembrane region" description="Helical; Name=9" evidence="3">
    <location>
        <begin position="827"/>
        <end position="847"/>
    </location>
</feature>
<feature type="topological domain" description="Extracellular" evidence="3">
    <location>
        <begin position="848"/>
        <end position="853"/>
    </location>
</feature>
<feature type="transmembrane region" description="Helical; Name=10" evidence="3">
    <location>
        <begin position="854"/>
        <end position="878"/>
    </location>
</feature>
<feature type="topological domain" description="Cytoplasmic" evidence="3">
    <location>
        <begin position="879"/>
        <end position="920"/>
    </location>
</feature>
<feature type="region of interest" description="Disordered" evidence="2">
    <location>
        <begin position="1"/>
        <end position="77"/>
    </location>
</feature>
<feature type="compositionally biased region" description="Acidic residues" evidence="2">
    <location>
        <begin position="38"/>
        <end position="51"/>
    </location>
</feature>
<feature type="active site" description="4-aspartylphosphate intermediate" evidence="1">
    <location>
        <position position="378"/>
    </location>
</feature>
<feature type="binding site" evidence="1">
    <location>
        <position position="634"/>
    </location>
    <ligand>
        <name>Mg(2+)</name>
        <dbReference type="ChEBI" id="CHEBI:18420"/>
    </ligand>
</feature>
<feature type="binding site" evidence="1">
    <location>
        <position position="638"/>
    </location>
    <ligand>
        <name>Mg(2+)</name>
        <dbReference type="ChEBI" id="CHEBI:18420"/>
    </ligand>
</feature>
<feature type="sequence conflict" description="In Ref. 2; AAA33563." evidence="3" ref="2">
    <original>G</original>
    <variation>A</variation>
    <location>
        <position position="8"/>
    </location>
</feature>
<feature type="sequence conflict" description="In Ref. 2; AAA33563." evidence="3" ref="2">
    <original>I</original>
    <variation>M</variation>
    <location>
        <position position="801"/>
    </location>
</feature>
<feature type="turn" evidence="4">
    <location>
        <begin position="69"/>
        <end position="71"/>
    </location>
</feature>
<feature type="turn" evidence="4">
    <location>
        <begin position="75"/>
        <end position="79"/>
    </location>
</feature>
<feature type="helix" evidence="4">
    <location>
        <begin position="80"/>
        <end position="82"/>
    </location>
</feature>
<feature type="turn" evidence="4">
    <location>
        <begin position="101"/>
        <end position="104"/>
    </location>
</feature>
<feature type="turn" evidence="4">
    <location>
        <begin position="107"/>
        <end position="110"/>
    </location>
</feature>
<feature type="helix" evidence="4">
    <location>
        <begin position="114"/>
        <end position="118"/>
    </location>
</feature>
<feature type="helix" evidence="4">
    <location>
        <begin position="123"/>
        <end position="133"/>
    </location>
</feature>
<feature type="turn" evidence="4">
    <location>
        <begin position="134"/>
        <end position="138"/>
    </location>
</feature>
<feature type="helix" evidence="4">
    <location>
        <begin position="143"/>
        <end position="174"/>
    </location>
</feature>
<feature type="strand" evidence="4">
    <location>
        <begin position="203"/>
        <end position="207"/>
    </location>
</feature>
<feature type="strand" evidence="4">
    <location>
        <begin position="214"/>
        <end position="216"/>
    </location>
</feature>
<feature type="strand" evidence="4">
    <location>
        <begin position="224"/>
        <end position="226"/>
    </location>
</feature>
<feature type="strand" evidence="4">
    <location>
        <begin position="228"/>
        <end position="232"/>
    </location>
</feature>
<feature type="strand" evidence="4">
    <location>
        <begin position="250"/>
        <end position="253"/>
    </location>
</feature>
<feature type="strand" evidence="4">
    <location>
        <begin position="255"/>
        <end position="260"/>
    </location>
</feature>
<feature type="strand" evidence="4">
    <location>
        <begin position="263"/>
        <end position="265"/>
    </location>
</feature>
<feature type="helix" evidence="4">
    <location>
        <begin position="286"/>
        <end position="314"/>
    </location>
</feature>
<feature type="helix" evidence="4">
    <location>
        <begin position="319"/>
        <end position="333"/>
    </location>
</feature>
<feature type="helix" evidence="4">
    <location>
        <begin position="338"/>
        <end position="355"/>
    </location>
</feature>
<feature type="strand" evidence="4">
    <location>
        <begin position="358"/>
        <end position="362"/>
    </location>
</feature>
<feature type="helix" evidence="4">
    <location>
        <begin position="365"/>
        <end position="371"/>
    </location>
</feature>
<feature type="strand" evidence="4">
    <location>
        <begin position="374"/>
        <end position="378"/>
    </location>
</feature>
<feature type="turn" evidence="4">
    <location>
        <begin position="381"/>
        <end position="383"/>
    </location>
</feature>
<feature type="strand" evidence="4">
    <location>
        <begin position="397"/>
        <end position="399"/>
    </location>
</feature>
<feature type="helix" evidence="4">
    <location>
        <begin position="403"/>
        <end position="410"/>
    </location>
</feature>
<feature type="strand" evidence="4">
    <location>
        <begin position="416"/>
        <end position="418"/>
    </location>
</feature>
<feature type="helix" evidence="4">
    <location>
        <begin position="421"/>
        <end position="428"/>
    </location>
</feature>
<feature type="strand" evidence="4">
    <location>
        <begin position="433"/>
        <end position="435"/>
    </location>
</feature>
<feature type="turn" evidence="4">
    <location>
        <begin position="436"/>
        <end position="440"/>
    </location>
</feature>
<feature type="strand" evidence="4">
    <location>
        <begin position="445"/>
        <end position="449"/>
    </location>
</feature>
<feature type="turn" evidence="4">
    <location>
        <begin position="453"/>
        <end position="455"/>
    </location>
</feature>
<feature type="strand" evidence="4">
    <location>
        <begin position="457"/>
        <end position="463"/>
    </location>
</feature>
<feature type="strand" evidence="4">
    <location>
        <begin position="469"/>
        <end position="475"/>
    </location>
</feature>
<feature type="helix" evidence="4">
    <location>
        <begin position="477"/>
        <end position="484"/>
    </location>
</feature>
<feature type="strand" evidence="4">
    <location>
        <begin position="486"/>
        <end position="488"/>
    </location>
</feature>
<feature type="helix" evidence="4">
    <location>
        <begin position="492"/>
        <end position="507"/>
    </location>
</feature>
<feature type="strand" evidence="4">
    <location>
        <begin position="511"/>
        <end position="517"/>
    </location>
</feature>
<feature type="strand" evidence="4">
    <location>
        <begin position="519"/>
        <end position="522"/>
    </location>
</feature>
<feature type="strand" evidence="4">
    <location>
        <begin position="525"/>
        <end position="533"/>
    </location>
</feature>
<feature type="helix" evidence="4">
    <location>
        <begin position="540"/>
        <end position="549"/>
    </location>
</feature>
<feature type="strand" evidence="4">
    <location>
        <begin position="553"/>
        <end position="560"/>
    </location>
</feature>
<feature type="helix" evidence="4">
    <location>
        <begin position="562"/>
        <end position="572"/>
    </location>
</feature>
<feature type="strand" evidence="4">
    <location>
        <begin position="578"/>
        <end position="580"/>
    </location>
</feature>
<feature type="helix" evidence="4">
    <location>
        <begin position="581"/>
        <end position="584"/>
    </location>
</feature>
<feature type="strand" evidence="4">
    <location>
        <begin position="586"/>
        <end position="588"/>
    </location>
</feature>
<feature type="helix" evidence="4">
    <location>
        <begin position="594"/>
        <end position="602"/>
    </location>
</feature>
<feature type="strand" evidence="4">
    <location>
        <begin position="605"/>
        <end position="609"/>
    </location>
</feature>
<feature type="helix" evidence="4">
    <location>
        <begin position="612"/>
        <end position="624"/>
    </location>
</feature>
<feature type="strand" evidence="4">
    <location>
        <begin position="629"/>
        <end position="633"/>
    </location>
</feature>
<feature type="helix" evidence="4">
    <location>
        <begin position="639"/>
        <end position="644"/>
    </location>
</feature>
<feature type="strand" evidence="4">
    <location>
        <begin position="645"/>
        <end position="650"/>
    </location>
</feature>
<feature type="helix" evidence="4">
    <location>
        <begin position="656"/>
        <end position="661"/>
    </location>
</feature>
<feature type="strand" evidence="4">
    <location>
        <begin position="663"/>
        <end position="668"/>
    </location>
</feature>
<feature type="helix" evidence="4">
    <location>
        <begin position="671"/>
        <end position="713"/>
    </location>
</feature>
<feature type="helix" evidence="4">
    <location>
        <begin position="719"/>
        <end position="728"/>
    </location>
</feature>
<feature type="turn" evidence="4">
    <location>
        <begin position="729"/>
        <end position="731"/>
    </location>
</feature>
<feature type="turn" evidence="4">
    <location>
        <begin position="734"/>
        <end position="737"/>
    </location>
</feature>
<feature type="helix" evidence="4">
    <location>
        <begin position="752"/>
        <end position="780"/>
    </location>
</feature>
<feature type="turn" evidence="4">
    <location>
        <begin position="782"/>
        <end position="784"/>
    </location>
</feature>
<feature type="helix" evidence="4">
    <location>
        <begin position="793"/>
        <end position="806"/>
    </location>
</feature>
<feature type="helix" evidence="4">
    <location>
        <begin position="809"/>
        <end position="812"/>
    </location>
</feature>
<feature type="strand" evidence="4">
    <location>
        <begin position="813"/>
        <end position="817"/>
    </location>
</feature>
<feature type="helix" evidence="4">
    <location>
        <begin position="825"/>
        <end position="844"/>
    </location>
</feature>
<feature type="strand" evidence="4">
    <location>
        <begin position="848"/>
        <end position="850"/>
    </location>
</feature>
<feature type="helix" evidence="4">
    <location>
        <begin position="854"/>
        <end position="877"/>
    </location>
</feature>
<feature type="helix" evidence="4">
    <location>
        <begin position="897"/>
        <end position="918"/>
    </location>
</feature>
<proteinExistence type="evidence at protein level"/>
<gene>
    <name type="primary">pma-1</name>
    <name type="ORF">B1D1.210</name>
    <name type="ORF">NCU01680</name>
</gene>
<sequence length="920" mass="99887">MADHSASGAPALSTNIESGKFDEKAAEAAAYQPKPKVEDDEDEDIDALIEDLESHDGHDAEEEEEEATPGGGRVVPEDMLQTDTRVGLTSEEVVQRRRKYGLNQMKEEKENHFLKFLGFFVGPIQFVMEGAAVLAAGLEDWVDFGVICGLLLLNAVVGFVQEFQAGSIVDELKKTLALKAVVLRDGTLKEIEAPEVVPGDILQVEEGTIIPADGRIVTDDAFLQVDQSALTGESLAVDKHKGDQVFASSAVKRGEAFVVITATGDNTFVGRAAALVNAASGGSGHFTEVLNGIGTILLILVIFTLLIVWVSSFYRSNPIVQILEFTLAITIIGVPVGLPAVVTTTMAVGAAYLAKKKAIVQKLSAIESLAGVEILCSDKTGTLTKNKLSLHDPYTVAGVDPEDLMLTACLAASRKKKGIDAIDKAFLKSLKYYPRAKSVLSKYKVLQFHPFDPVSKKVVAVVESPQGERITCVKGAPLFVLKTVEEDHPIPEEVDQAYKNKVAEFATRGFRSLGVARKRGEGSWEILGIMPCMDPPRHDTYKTVCEAKTLGLSIKMLTGDAVGIARETSRQLGLGTNIYNAERLGLGGGGDMPGSEVYDFVEAADGFAEVFPQHKYNVVEILQQRGYLVAMTGDGVNDAPSLKKADTGIAVEGSSDAARSAADIVFLAPGLGAIIDALKTSRQIFHRMYAYVVYRIALSIHLEIFLGLWIAILNRSLNIELVVFIAIFADVATLAIAYDNAPYSQTPVKWNLPKLWGMSVLLGVVLAVGTWITVTTMYAQGENGGIVQNFGNMDEVLFLQISLTENWLIFITRANGPFWSSIPSWQLSGAIFLVDILATCFTIWGWFEHSDTSIVAVVRIWIFSFGIFCIMGGVYYILQDSVGFDNLMHGKSPKGNQKQRSLEDFVVSLQRVSTQHEKSQ</sequence>
<name>PMA1_NEUCR</name>
<reference key="1">
    <citation type="journal article" date="1986" name="Proc. Natl. Acad. Sci. U.S.A.">
        <title>Amino acid sequence of the plasma membrane ATPase of Neurospora crassa: deduction from genomic and cDNA sequences.</title>
        <authorList>
            <person name="Hager K.M."/>
            <person name="Mandala S.M."/>
            <person name="Davenport J.W."/>
            <person name="Speicher D.W."/>
            <person name="Benz E.J. Jr."/>
            <person name="Slayman C.W."/>
        </authorList>
    </citation>
    <scope>NUCLEOTIDE SEQUENCE [GENOMIC DNA]</scope>
</reference>
<reference key="2">
    <citation type="journal article" date="1986" name="J. Biol. Chem.">
        <title>Primary structure of the Neurospora plasma membrane H+-ATPase deduced from the gene sequence. Homology to Na+/K+-, Ca2+-, and K+-ATPase.</title>
        <authorList>
            <person name="Addison R."/>
        </authorList>
    </citation>
    <scope>NUCLEOTIDE SEQUENCE [GENOMIC DNA]</scope>
</reference>
<reference key="3">
    <citation type="journal article" date="2003" name="Nucleic Acids Res.">
        <title>What's in the genome of a filamentous fungus? Analysis of the Neurospora genome sequence.</title>
        <authorList>
            <person name="Mannhaupt G."/>
            <person name="Montrone C."/>
            <person name="Haase D."/>
            <person name="Mewes H.-W."/>
            <person name="Aign V."/>
            <person name="Hoheisel J.D."/>
            <person name="Fartmann B."/>
            <person name="Nyakatura G."/>
            <person name="Kempken F."/>
            <person name="Maier J."/>
            <person name="Schulte U."/>
        </authorList>
    </citation>
    <scope>NUCLEOTIDE SEQUENCE [LARGE SCALE GENOMIC DNA]</scope>
    <source>
        <strain>ATCC 24698 / 74-OR23-1A / CBS 708.71 / DSM 1257 / FGSC 987</strain>
    </source>
</reference>
<reference key="4">
    <citation type="journal article" date="2003" name="Nature">
        <title>The genome sequence of the filamentous fungus Neurospora crassa.</title>
        <authorList>
            <person name="Galagan J.E."/>
            <person name="Calvo S.E."/>
            <person name="Borkovich K.A."/>
            <person name="Selker E.U."/>
            <person name="Read N.D."/>
            <person name="Jaffe D.B."/>
            <person name="FitzHugh W."/>
            <person name="Ma L.-J."/>
            <person name="Smirnov S."/>
            <person name="Purcell S."/>
            <person name="Rehman B."/>
            <person name="Elkins T."/>
            <person name="Engels R."/>
            <person name="Wang S."/>
            <person name="Nielsen C.B."/>
            <person name="Butler J."/>
            <person name="Endrizzi M."/>
            <person name="Qui D."/>
            <person name="Ianakiev P."/>
            <person name="Bell-Pedersen D."/>
            <person name="Nelson M.A."/>
            <person name="Werner-Washburne M."/>
            <person name="Selitrennikoff C.P."/>
            <person name="Kinsey J.A."/>
            <person name="Braun E.L."/>
            <person name="Zelter A."/>
            <person name="Schulte U."/>
            <person name="Kothe G.O."/>
            <person name="Jedd G."/>
            <person name="Mewes H.-W."/>
            <person name="Staben C."/>
            <person name="Marcotte E."/>
            <person name="Greenberg D."/>
            <person name="Roy A."/>
            <person name="Foley K."/>
            <person name="Naylor J."/>
            <person name="Stange-Thomann N."/>
            <person name="Barrett R."/>
            <person name="Gnerre S."/>
            <person name="Kamal M."/>
            <person name="Kamvysselis M."/>
            <person name="Mauceli E.W."/>
            <person name="Bielke C."/>
            <person name="Rudd S."/>
            <person name="Frishman D."/>
            <person name="Krystofova S."/>
            <person name="Rasmussen C."/>
            <person name="Metzenberg R.L."/>
            <person name="Perkins D.D."/>
            <person name="Kroken S."/>
            <person name="Cogoni C."/>
            <person name="Macino G."/>
            <person name="Catcheside D.E.A."/>
            <person name="Li W."/>
            <person name="Pratt R.J."/>
            <person name="Osmani S.A."/>
            <person name="DeSouza C.P.C."/>
            <person name="Glass N.L."/>
            <person name="Orbach M.J."/>
            <person name="Berglund J.A."/>
            <person name="Voelker R."/>
            <person name="Yarden O."/>
            <person name="Plamann M."/>
            <person name="Seiler S."/>
            <person name="Dunlap J.C."/>
            <person name="Radford A."/>
            <person name="Aramayo R."/>
            <person name="Natvig D.O."/>
            <person name="Alex L.A."/>
            <person name="Mannhaupt G."/>
            <person name="Ebbole D.J."/>
            <person name="Freitag M."/>
            <person name="Paulsen I."/>
            <person name="Sachs M.S."/>
            <person name="Lander E.S."/>
            <person name="Nusbaum C."/>
            <person name="Birren B.W."/>
        </authorList>
    </citation>
    <scope>NUCLEOTIDE SEQUENCE [LARGE SCALE GENOMIC DNA]</scope>
    <source>
        <strain>ATCC 24698 / 74-OR23-1A / CBS 708.71 / DSM 1257 / FGSC 987</strain>
    </source>
</reference>
<reference key="5">
    <citation type="journal article" date="1989" name="J. Biol. Chem.">
        <title>Cysteine 532 and cysteine 545 are the N-ethylmaleimide-reactive residues of the Neurospora plasma membrane H+-ATPase.</title>
        <authorList>
            <person name="Pardo J.P."/>
            <person name="Slayman C.W."/>
        </authorList>
    </citation>
    <scope>PARTIAL PROTEIN SEQUENCE</scope>
</reference>
<reference key="6">
    <citation type="journal article" date="1990" name="J. Biol. Chem.">
        <title>Identification of the major cytoplasmic regions of the Neurospora crassa plasma membrane H(+)-ATPase using protein chemical techniques.</title>
        <authorList>
            <person name="Scarborough G.A."/>
            <person name="Hennessey J.P. Jr."/>
        </authorList>
    </citation>
    <scope>PARTIAL PROTEIN SEQUENCE</scope>
    <scope>TOPOLOGY</scope>
</reference>
<reference key="7">
    <citation type="journal article" date="1991" name="J. Biol. Chem.">
        <title>Identification of the membrane-embedded regions of the Neurospora crassa plasma membrane H(+)-ATPase.</title>
        <authorList>
            <person name="Rao U.S."/>
            <person name="Hennessey J.P. Jr."/>
            <person name="Scarborough G.A."/>
        </authorList>
    </citation>
    <scope>TOPOLOGY</scope>
</reference>
<reference key="8">
    <citation type="journal article" date="1992" name="Biochim. Biophys. Acta">
        <title>Cytoplasmic location of amino acids 359-440 of the Neurospora crassa plasma membrane H(+)-ATPase.</title>
        <authorList>
            <person name="Rao U.S."/>
            <person name="Bauzon D.D."/>
            <person name="Scarborough G.A."/>
        </authorList>
    </citation>
    <scope>TOPOLOGY</scope>
</reference>
<reference key="9">
    <citation type="journal article" date="1994" name="J. Biol. Chem.">
        <title>Topology of the Neurospora plasma membrane H(+)-ATPase. Localization of a transmembrane segment.</title>
        <authorList>
            <person name="Lin A."/>
            <person name="Addison R."/>
        </authorList>
    </citation>
    <scope>TOPOLOGY</scope>
</reference>
<accession>P07038</accession>
<accession>Q7RV59</accession>
<dbReference type="EC" id="7.1.2.1"/>
<dbReference type="EMBL" id="M14085">
    <property type="protein sequence ID" value="AAA33561.1"/>
    <property type="molecule type" value="Genomic_DNA"/>
</dbReference>
<dbReference type="EMBL" id="J02602">
    <property type="protein sequence ID" value="AAA33563.1"/>
    <property type="molecule type" value="Genomic_DNA"/>
</dbReference>
<dbReference type="EMBL" id="AL355927">
    <property type="protein sequence ID" value="CAB91270.1"/>
    <property type="molecule type" value="Genomic_DNA"/>
</dbReference>
<dbReference type="EMBL" id="CM002237">
    <property type="protein sequence ID" value="EAA27650.1"/>
    <property type="molecule type" value="Genomic_DNA"/>
</dbReference>
<dbReference type="PIR" id="A26497">
    <property type="entry name" value="PXNCP"/>
</dbReference>
<dbReference type="RefSeq" id="XP_956886.1">
    <property type="nucleotide sequence ID" value="XM_951793.3"/>
</dbReference>
<dbReference type="PDB" id="1MHS">
    <property type="method" value="EM"/>
    <property type="resolution" value="8.00 A"/>
    <property type="chains" value="A/B=1-920"/>
</dbReference>
<dbReference type="PDB" id="7NXF">
    <property type="method" value="EM"/>
    <property type="resolution" value="3.10 A"/>
    <property type="chains" value="A=1-920"/>
</dbReference>
<dbReference type="PDB" id="7NY1">
    <property type="method" value="EM"/>
    <property type="resolution" value="3.26 A"/>
    <property type="chains" value="A/B/C/D/E/F=1-920"/>
</dbReference>
<dbReference type="PDBsum" id="1MHS"/>
<dbReference type="PDBsum" id="7NXF"/>
<dbReference type="PDBsum" id="7NY1"/>
<dbReference type="SMR" id="P07038"/>
<dbReference type="FunCoup" id="P07038">
    <property type="interactions" value="427"/>
</dbReference>
<dbReference type="STRING" id="367110.P07038"/>
<dbReference type="TCDB" id="3.A.3.3.1">
    <property type="family name" value="the p-type atpase (p-atpase) superfamily"/>
</dbReference>
<dbReference type="PaxDb" id="5141-EFNCRP00000001834"/>
<dbReference type="EnsemblFungi" id="EAA27650">
    <property type="protein sequence ID" value="EAA27650"/>
    <property type="gene ID" value="NCU01680"/>
</dbReference>
<dbReference type="GeneID" id="3873048"/>
<dbReference type="KEGG" id="ncr:NCU01680"/>
<dbReference type="VEuPathDB" id="FungiDB:NCU01680"/>
<dbReference type="HOGENOM" id="CLU_002360_6_0_1"/>
<dbReference type="InParanoid" id="P07038"/>
<dbReference type="OrthoDB" id="116380at2759"/>
<dbReference type="EvolutionaryTrace" id="P07038"/>
<dbReference type="Proteomes" id="UP000001805">
    <property type="component" value="Chromosome 6, Linkage Group II"/>
</dbReference>
<dbReference type="GO" id="GO:0005886">
    <property type="term" value="C:plasma membrane"/>
    <property type="evidence" value="ECO:0000318"/>
    <property type="project" value="GO_Central"/>
</dbReference>
<dbReference type="GO" id="GO:0005524">
    <property type="term" value="F:ATP binding"/>
    <property type="evidence" value="ECO:0007669"/>
    <property type="project" value="UniProtKB-KW"/>
</dbReference>
<dbReference type="GO" id="GO:0016887">
    <property type="term" value="F:ATP hydrolysis activity"/>
    <property type="evidence" value="ECO:0007669"/>
    <property type="project" value="InterPro"/>
</dbReference>
<dbReference type="GO" id="GO:0046872">
    <property type="term" value="F:metal ion binding"/>
    <property type="evidence" value="ECO:0007669"/>
    <property type="project" value="UniProtKB-KW"/>
</dbReference>
<dbReference type="GO" id="GO:0008553">
    <property type="term" value="F:P-type proton-exporting transporter activity"/>
    <property type="evidence" value="ECO:0000318"/>
    <property type="project" value="GO_Central"/>
</dbReference>
<dbReference type="GO" id="GO:0120029">
    <property type="term" value="P:proton export across plasma membrane"/>
    <property type="evidence" value="ECO:0007669"/>
    <property type="project" value="InterPro"/>
</dbReference>
<dbReference type="GO" id="GO:1902600">
    <property type="term" value="P:proton transmembrane transport"/>
    <property type="evidence" value="ECO:0000318"/>
    <property type="project" value="GO_Central"/>
</dbReference>
<dbReference type="GO" id="GO:0051453">
    <property type="term" value="P:regulation of intracellular pH"/>
    <property type="evidence" value="ECO:0000318"/>
    <property type="project" value="GO_Central"/>
</dbReference>
<dbReference type="CDD" id="cd02076">
    <property type="entry name" value="P-type_ATPase_H"/>
    <property type="match status" value="1"/>
</dbReference>
<dbReference type="FunFam" id="2.70.150.10:FF:000011">
    <property type="entry name" value="Plasma membrane ATPase"/>
    <property type="match status" value="1"/>
</dbReference>
<dbReference type="FunFam" id="3.40.1110.10:FF:000005">
    <property type="entry name" value="Plasma membrane ATPase"/>
    <property type="match status" value="1"/>
</dbReference>
<dbReference type="FunFam" id="3.40.50.1000:FF:000008">
    <property type="entry name" value="Plasma membrane ATPase"/>
    <property type="match status" value="1"/>
</dbReference>
<dbReference type="Gene3D" id="3.40.1110.10">
    <property type="entry name" value="Calcium-transporting ATPase, cytoplasmic domain N"/>
    <property type="match status" value="1"/>
</dbReference>
<dbReference type="Gene3D" id="2.70.150.10">
    <property type="entry name" value="Calcium-transporting ATPase, cytoplasmic transduction domain A"/>
    <property type="match status" value="1"/>
</dbReference>
<dbReference type="Gene3D" id="1.20.1110.10">
    <property type="entry name" value="Calcium-transporting ATPase, transmembrane domain"/>
    <property type="match status" value="1"/>
</dbReference>
<dbReference type="Gene3D" id="3.40.50.1000">
    <property type="entry name" value="HAD superfamily/HAD-like"/>
    <property type="match status" value="1"/>
</dbReference>
<dbReference type="InterPro" id="IPR004014">
    <property type="entry name" value="ATPase_P-typ_cation-transptr_N"/>
</dbReference>
<dbReference type="InterPro" id="IPR023299">
    <property type="entry name" value="ATPase_P-typ_cyto_dom_N"/>
</dbReference>
<dbReference type="InterPro" id="IPR018303">
    <property type="entry name" value="ATPase_P-typ_P_site"/>
</dbReference>
<dbReference type="InterPro" id="IPR023298">
    <property type="entry name" value="ATPase_P-typ_TM_dom_sf"/>
</dbReference>
<dbReference type="InterPro" id="IPR008250">
    <property type="entry name" value="ATPase_P-typ_transduc_dom_A_sf"/>
</dbReference>
<dbReference type="InterPro" id="IPR036412">
    <property type="entry name" value="HAD-like_sf"/>
</dbReference>
<dbReference type="InterPro" id="IPR023214">
    <property type="entry name" value="HAD_sf"/>
</dbReference>
<dbReference type="InterPro" id="IPR006534">
    <property type="entry name" value="P-type_ATPase_IIIA"/>
</dbReference>
<dbReference type="InterPro" id="IPR001757">
    <property type="entry name" value="P_typ_ATPase"/>
</dbReference>
<dbReference type="InterPro" id="IPR044492">
    <property type="entry name" value="P_typ_ATPase_HD_dom"/>
</dbReference>
<dbReference type="NCBIfam" id="TIGR01647">
    <property type="entry name" value="ATPase-IIIA_H"/>
    <property type="match status" value="1"/>
</dbReference>
<dbReference type="NCBIfam" id="TIGR01494">
    <property type="entry name" value="ATPase_P-type"/>
    <property type="match status" value="2"/>
</dbReference>
<dbReference type="PANTHER" id="PTHR42861">
    <property type="entry name" value="CALCIUM-TRANSPORTING ATPASE"/>
    <property type="match status" value="1"/>
</dbReference>
<dbReference type="Pfam" id="PF00690">
    <property type="entry name" value="Cation_ATPase_N"/>
    <property type="match status" value="1"/>
</dbReference>
<dbReference type="Pfam" id="PF00122">
    <property type="entry name" value="E1-E2_ATPase"/>
    <property type="match status" value="1"/>
</dbReference>
<dbReference type="Pfam" id="PF00702">
    <property type="entry name" value="Hydrolase"/>
    <property type="match status" value="1"/>
</dbReference>
<dbReference type="PRINTS" id="PR00119">
    <property type="entry name" value="CATATPASE"/>
</dbReference>
<dbReference type="PRINTS" id="PR00120">
    <property type="entry name" value="HATPASE"/>
</dbReference>
<dbReference type="SFLD" id="SFLDS00003">
    <property type="entry name" value="Haloacid_Dehalogenase"/>
    <property type="match status" value="1"/>
</dbReference>
<dbReference type="SFLD" id="SFLDF00027">
    <property type="entry name" value="p-type_atpase"/>
    <property type="match status" value="1"/>
</dbReference>
<dbReference type="SMART" id="SM00831">
    <property type="entry name" value="Cation_ATPase_N"/>
    <property type="match status" value="1"/>
</dbReference>
<dbReference type="SUPFAM" id="SSF81653">
    <property type="entry name" value="Calcium ATPase, transduction domain A"/>
    <property type="match status" value="1"/>
</dbReference>
<dbReference type="SUPFAM" id="SSF81665">
    <property type="entry name" value="Calcium ATPase, transmembrane domain M"/>
    <property type="match status" value="1"/>
</dbReference>
<dbReference type="SUPFAM" id="SSF56784">
    <property type="entry name" value="HAD-like"/>
    <property type="match status" value="1"/>
</dbReference>
<dbReference type="PROSITE" id="PS00154">
    <property type="entry name" value="ATPASE_E1_E2"/>
    <property type="match status" value="1"/>
</dbReference>
<organism>
    <name type="scientific">Neurospora crassa (strain ATCC 24698 / 74-OR23-1A / CBS 708.71 / DSM 1257 / FGSC 987)</name>
    <dbReference type="NCBI Taxonomy" id="367110"/>
    <lineage>
        <taxon>Eukaryota</taxon>
        <taxon>Fungi</taxon>
        <taxon>Dikarya</taxon>
        <taxon>Ascomycota</taxon>
        <taxon>Pezizomycotina</taxon>
        <taxon>Sordariomycetes</taxon>
        <taxon>Sordariomycetidae</taxon>
        <taxon>Sordariales</taxon>
        <taxon>Sordariaceae</taxon>
        <taxon>Neurospora</taxon>
    </lineage>
</organism>
<evidence type="ECO:0000250" key="1"/>
<evidence type="ECO:0000256" key="2">
    <source>
        <dbReference type="SAM" id="MobiDB-lite"/>
    </source>
</evidence>
<evidence type="ECO:0000305" key="3"/>
<evidence type="ECO:0007829" key="4">
    <source>
        <dbReference type="PDB" id="7NXF"/>
    </source>
</evidence>
<comment type="function">
    <text>The plasma membrane ATPase of plants and fungi is a hydrogen ion pump. The proton gradient it generates drives the active transport of nutrients by H(+)-symport. The resulting external acidification and/or internal alkinization may mediate growth responses.</text>
</comment>
<comment type="catalytic activity">
    <reaction>
        <text>ATP + H2O + H(+)(in) = ADP + phosphate + 2 H(+)(out)</text>
        <dbReference type="Rhea" id="RHEA:20852"/>
        <dbReference type="ChEBI" id="CHEBI:15377"/>
        <dbReference type="ChEBI" id="CHEBI:15378"/>
        <dbReference type="ChEBI" id="CHEBI:30616"/>
        <dbReference type="ChEBI" id="CHEBI:43474"/>
        <dbReference type="ChEBI" id="CHEBI:456216"/>
        <dbReference type="EC" id="7.1.2.1"/>
    </reaction>
</comment>
<comment type="subcellular location">
    <subcellularLocation>
        <location>Cell membrane</location>
        <topology>Multi-pass membrane protein</topology>
    </subcellularLocation>
</comment>
<comment type="similarity">
    <text evidence="3">Belongs to the cation transport ATPase (P-type) (TC 3.A.3) family. Type IIIA subfamily.</text>
</comment>
<protein>
    <recommendedName>
        <fullName>Plasma membrane ATPase</fullName>
        <ecNumber>7.1.2.1</ecNumber>
    </recommendedName>
    <alternativeName>
        <fullName>Proton pump</fullName>
    </alternativeName>
</protein>
<keyword id="KW-0002">3D-structure</keyword>
<keyword id="KW-0067">ATP-binding</keyword>
<keyword id="KW-1003">Cell membrane</keyword>
<keyword id="KW-0903">Direct protein sequencing</keyword>
<keyword id="KW-0375">Hydrogen ion transport</keyword>
<keyword id="KW-0406">Ion transport</keyword>
<keyword id="KW-0460">Magnesium</keyword>
<keyword id="KW-0472">Membrane</keyword>
<keyword id="KW-0479">Metal-binding</keyword>
<keyword id="KW-0547">Nucleotide-binding</keyword>
<keyword id="KW-0597">Phosphoprotein</keyword>
<keyword id="KW-1185">Reference proteome</keyword>
<keyword id="KW-1278">Translocase</keyword>
<keyword id="KW-0812">Transmembrane</keyword>
<keyword id="KW-1133">Transmembrane helix</keyword>
<keyword id="KW-0813">Transport</keyword>